<proteinExistence type="inferred from homology"/>
<reference key="1">
    <citation type="submission" date="2007-11" db="EMBL/GenBank/DDBJ databases">
        <title>Genome sequencing of phylogenetically and phenotypically diverse Coxiella burnetii isolates.</title>
        <authorList>
            <person name="Seshadri R."/>
            <person name="Samuel J.E."/>
        </authorList>
    </citation>
    <scope>NUCLEOTIDE SEQUENCE [LARGE SCALE GENOMIC DNA]</scope>
    <source>
        <strain>RSA 331 / Henzerling II</strain>
    </source>
</reference>
<accession>A9NDS1</accession>
<evidence type="ECO:0000255" key="1">
    <source>
        <dbReference type="HAMAP-Rule" id="MF_00113"/>
    </source>
</evidence>
<dbReference type="EC" id="2.4.99.17" evidence="1"/>
<dbReference type="EMBL" id="CP000890">
    <property type="protein sequence ID" value="ABX77998.1"/>
    <property type="molecule type" value="Genomic_DNA"/>
</dbReference>
<dbReference type="RefSeq" id="WP_012220550.1">
    <property type="nucleotide sequence ID" value="NC_010117.1"/>
</dbReference>
<dbReference type="SMR" id="A9NDS1"/>
<dbReference type="KEGG" id="cbs:COXBURSA331_A1350"/>
<dbReference type="HOGENOM" id="CLU_039110_1_0_6"/>
<dbReference type="UniPathway" id="UPA00392"/>
<dbReference type="GO" id="GO:0005737">
    <property type="term" value="C:cytoplasm"/>
    <property type="evidence" value="ECO:0007669"/>
    <property type="project" value="UniProtKB-SubCell"/>
</dbReference>
<dbReference type="GO" id="GO:0051075">
    <property type="term" value="F:S-adenosylmethionine:tRNA ribosyltransferase-isomerase activity"/>
    <property type="evidence" value="ECO:0007669"/>
    <property type="project" value="UniProtKB-EC"/>
</dbReference>
<dbReference type="GO" id="GO:0008616">
    <property type="term" value="P:queuosine biosynthetic process"/>
    <property type="evidence" value="ECO:0007669"/>
    <property type="project" value="UniProtKB-UniRule"/>
</dbReference>
<dbReference type="GO" id="GO:0002099">
    <property type="term" value="P:tRNA wobble guanine modification"/>
    <property type="evidence" value="ECO:0007669"/>
    <property type="project" value="TreeGrafter"/>
</dbReference>
<dbReference type="FunFam" id="3.40.1780.10:FF:000001">
    <property type="entry name" value="S-adenosylmethionine:tRNA ribosyltransferase-isomerase"/>
    <property type="match status" value="1"/>
</dbReference>
<dbReference type="Gene3D" id="2.40.10.240">
    <property type="entry name" value="QueA-like"/>
    <property type="match status" value="1"/>
</dbReference>
<dbReference type="Gene3D" id="3.40.1780.10">
    <property type="entry name" value="QueA-like"/>
    <property type="match status" value="1"/>
</dbReference>
<dbReference type="HAMAP" id="MF_00113">
    <property type="entry name" value="QueA"/>
    <property type="match status" value="1"/>
</dbReference>
<dbReference type="InterPro" id="IPR003699">
    <property type="entry name" value="QueA"/>
</dbReference>
<dbReference type="InterPro" id="IPR042118">
    <property type="entry name" value="QueA_dom1"/>
</dbReference>
<dbReference type="InterPro" id="IPR042119">
    <property type="entry name" value="QueA_dom2"/>
</dbReference>
<dbReference type="InterPro" id="IPR036100">
    <property type="entry name" value="QueA_sf"/>
</dbReference>
<dbReference type="NCBIfam" id="NF001140">
    <property type="entry name" value="PRK00147.1"/>
    <property type="match status" value="1"/>
</dbReference>
<dbReference type="NCBIfam" id="TIGR00113">
    <property type="entry name" value="queA"/>
    <property type="match status" value="1"/>
</dbReference>
<dbReference type="PANTHER" id="PTHR30307">
    <property type="entry name" value="S-ADENOSYLMETHIONINE:TRNA RIBOSYLTRANSFERASE-ISOMERASE"/>
    <property type="match status" value="1"/>
</dbReference>
<dbReference type="PANTHER" id="PTHR30307:SF0">
    <property type="entry name" value="S-ADENOSYLMETHIONINE:TRNA RIBOSYLTRANSFERASE-ISOMERASE"/>
    <property type="match status" value="1"/>
</dbReference>
<dbReference type="Pfam" id="PF02547">
    <property type="entry name" value="Queuosine_synth"/>
    <property type="match status" value="1"/>
</dbReference>
<dbReference type="SUPFAM" id="SSF111337">
    <property type="entry name" value="QueA-like"/>
    <property type="match status" value="1"/>
</dbReference>
<feature type="chain" id="PRO_1000076000" description="S-adenosylmethionine:tRNA ribosyltransferase-isomerase">
    <location>
        <begin position="1"/>
        <end position="343"/>
    </location>
</feature>
<gene>
    <name evidence="1" type="primary">queA</name>
    <name type="ordered locus">COXBURSA331_A1350</name>
</gene>
<organism>
    <name type="scientific">Coxiella burnetii (strain RSA 331 / Henzerling II)</name>
    <dbReference type="NCBI Taxonomy" id="360115"/>
    <lineage>
        <taxon>Bacteria</taxon>
        <taxon>Pseudomonadati</taxon>
        <taxon>Pseudomonadota</taxon>
        <taxon>Gammaproteobacteria</taxon>
        <taxon>Legionellales</taxon>
        <taxon>Coxiellaceae</taxon>
        <taxon>Coxiella</taxon>
    </lineage>
</organism>
<sequence length="343" mass="38781">MKNQWKTSDFDYNLPVELIAQRPLADRSGSRLLYIDRSRRTVSHRQFNGFVEQVKPNDLVVLNDTKVIPARLFGHKQTGGKVECLVERILSKDRFLAHIRASKAPKLGSQIIIADNFKIIIEGRYNDLFECVLHSSASILDLLYQHGRIPLPPYIQREPDKDDQARYQTIFAERAGAVAAPTAGLHFNEETFDALRKKGAAITYVTLHVGAGTFQPVRADSLADHRMHHEWMEVSKAVCDAIAKCRKNNGRVIAVGTTVMRCLETATKNSECRPYAGETDLFIYPGFQFNCVDALLTNFHLPKSTLLMLVCAFGGYELVMEAYQKAVENRYRFFSYGDAMLIS</sequence>
<keyword id="KW-0963">Cytoplasm</keyword>
<keyword id="KW-0671">Queuosine biosynthesis</keyword>
<keyword id="KW-0949">S-adenosyl-L-methionine</keyword>
<keyword id="KW-0808">Transferase</keyword>
<name>QUEA_COXBR</name>
<protein>
    <recommendedName>
        <fullName evidence="1">S-adenosylmethionine:tRNA ribosyltransferase-isomerase</fullName>
        <ecNumber evidence="1">2.4.99.17</ecNumber>
    </recommendedName>
    <alternativeName>
        <fullName evidence="1">Queuosine biosynthesis protein QueA</fullName>
    </alternativeName>
</protein>
<comment type="function">
    <text evidence="1">Transfers and isomerizes the ribose moiety from AdoMet to the 7-aminomethyl group of 7-deazaguanine (preQ1-tRNA) to give epoxyqueuosine (oQ-tRNA).</text>
</comment>
<comment type="catalytic activity">
    <reaction evidence="1">
        <text>7-aminomethyl-7-carbaguanosine(34) in tRNA + S-adenosyl-L-methionine = epoxyqueuosine(34) in tRNA + adenine + L-methionine + 2 H(+)</text>
        <dbReference type="Rhea" id="RHEA:32155"/>
        <dbReference type="Rhea" id="RHEA-COMP:10342"/>
        <dbReference type="Rhea" id="RHEA-COMP:18582"/>
        <dbReference type="ChEBI" id="CHEBI:15378"/>
        <dbReference type="ChEBI" id="CHEBI:16708"/>
        <dbReference type="ChEBI" id="CHEBI:57844"/>
        <dbReference type="ChEBI" id="CHEBI:59789"/>
        <dbReference type="ChEBI" id="CHEBI:82833"/>
        <dbReference type="ChEBI" id="CHEBI:194443"/>
        <dbReference type="EC" id="2.4.99.17"/>
    </reaction>
</comment>
<comment type="pathway">
    <text evidence="1">tRNA modification; tRNA-queuosine biosynthesis.</text>
</comment>
<comment type="subunit">
    <text evidence="1">Monomer.</text>
</comment>
<comment type="subcellular location">
    <subcellularLocation>
        <location evidence="1">Cytoplasm</location>
    </subcellularLocation>
</comment>
<comment type="similarity">
    <text evidence="1">Belongs to the QueA family.</text>
</comment>